<accession>Q29535</accession>
<comment type="catalytic activity">
    <reaction>
        <text>an [RNA] containing cytidine + H2O = an [RNA]-3'-cytidine-3'-phosphate + a 5'-hydroxy-ribonucleotide-3'-[RNA].</text>
        <dbReference type="EC" id="4.6.1.18"/>
    </reaction>
</comment>
<comment type="catalytic activity">
    <reaction>
        <text>an [RNA] containing uridine + H2O = an [RNA]-3'-uridine-3'-phosphate + a 5'-hydroxy-ribonucleotide-3'-[RNA].</text>
        <dbReference type="EC" id="4.6.1.18"/>
    </reaction>
</comment>
<comment type="subunit">
    <text evidence="1">Homodimer; disulfide-linked.</text>
</comment>
<comment type="subcellular location">
    <subcellularLocation>
        <location evidence="1">Secreted</location>
    </subcellularLocation>
</comment>
<comment type="similarity">
    <text evidence="2">Belongs to the pancreatic ribonuclease family.</text>
</comment>
<evidence type="ECO:0000250" key="1"/>
<evidence type="ECO:0000305" key="2"/>
<sequence>FCRKMTQGKCKPVNTFGHESLANVQAVCSQKKVICKNGLSNCYQSNSAIHYTDCRKTGSSNYPNCAYKTTRAEKRIIVACEGNL</sequence>
<name>RNS_GIRCA</name>
<proteinExistence type="evidence at protein level"/>
<dbReference type="EC" id="4.6.1.18"/>
<dbReference type="EMBL" id="S65129">
    <property type="protein sequence ID" value="AAB27933.1"/>
    <property type="molecule type" value="Genomic_DNA"/>
</dbReference>
<dbReference type="SMR" id="Q29535"/>
<dbReference type="GO" id="GO:0005576">
    <property type="term" value="C:extracellular region"/>
    <property type="evidence" value="ECO:0007669"/>
    <property type="project" value="UniProtKB-SubCell"/>
</dbReference>
<dbReference type="GO" id="GO:0016829">
    <property type="term" value="F:lyase activity"/>
    <property type="evidence" value="ECO:0007669"/>
    <property type="project" value="UniProtKB-KW"/>
</dbReference>
<dbReference type="GO" id="GO:0003676">
    <property type="term" value="F:nucleic acid binding"/>
    <property type="evidence" value="ECO:0007669"/>
    <property type="project" value="InterPro"/>
</dbReference>
<dbReference type="GO" id="GO:0004522">
    <property type="term" value="F:ribonuclease A activity"/>
    <property type="evidence" value="ECO:0007669"/>
    <property type="project" value="UniProtKB-EC"/>
</dbReference>
<dbReference type="GO" id="GO:0050830">
    <property type="term" value="P:defense response to Gram-positive bacterium"/>
    <property type="evidence" value="ECO:0007669"/>
    <property type="project" value="TreeGrafter"/>
</dbReference>
<dbReference type="CDD" id="cd06265">
    <property type="entry name" value="RNase_A_canonical"/>
    <property type="match status" value="1"/>
</dbReference>
<dbReference type="Gene3D" id="3.10.130.10">
    <property type="entry name" value="Ribonuclease A-like domain"/>
    <property type="match status" value="1"/>
</dbReference>
<dbReference type="InterPro" id="IPR001427">
    <property type="entry name" value="RNaseA"/>
</dbReference>
<dbReference type="InterPro" id="IPR036816">
    <property type="entry name" value="RNaseA-like_dom_sf"/>
</dbReference>
<dbReference type="InterPro" id="IPR023411">
    <property type="entry name" value="RNaseA_AS"/>
</dbReference>
<dbReference type="InterPro" id="IPR023412">
    <property type="entry name" value="RNaseA_domain"/>
</dbReference>
<dbReference type="PANTHER" id="PTHR11437">
    <property type="entry name" value="RIBONUCLEASE"/>
    <property type="match status" value="1"/>
</dbReference>
<dbReference type="PANTHER" id="PTHR11437:SF24">
    <property type="entry name" value="RIBONUCLEASE PANCREATIC"/>
    <property type="match status" value="1"/>
</dbReference>
<dbReference type="Pfam" id="PF00074">
    <property type="entry name" value="RnaseA"/>
    <property type="match status" value="1"/>
</dbReference>
<dbReference type="PRINTS" id="PR00794">
    <property type="entry name" value="RIBONUCLEASE"/>
</dbReference>
<dbReference type="SMART" id="SM00092">
    <property type="entry name" value="RNAse_Pc"/>
    <property type="match status" value="1"/>
</dbReference>
<dbReference type="SUPFAM" id="SSF54076">
    <property type="entry name" value="RNase A-like"/>
    <property type="match status" value="1"/>
</dbReference>
<dbReference type="PROSITE" id="PS00127">
    <property type="entry name" value="RNASE_PANCREATIC"/>
    <property type="match status" value="1"/>
</dbReference>
<gene>
    <name type="primary">SRN</name>
</gene>
<organism>
    <name type="scientific">Giraffa camelopardalis</name>
    <name type="common">Giraffe</name>
    <dbReference type="NCBI Taxonomy" id="9894"/>
    <lineage>
        <taxon>Eukaryota</taxon>
        <taxon>Metazoa</taxon>
        <taxon>Chordata</taxon>
        <taxon>Craniata</taxon>
        <taxon>Vertebrata</taxon>
        <taxon>Euteleostomi</taxon>
        <taxon>Mammalia</taxon>
        <taxon>Eutheria</taxon>
        <taxon>Laurasiatheria</taxon>
        <taxon>Artiodactyla</taxon>
        <taxon>Ruminantia</taxon>
        <taxon>Pecora</taxon>
        <taxon>Giraffidae</taxon>
        <taxon>Giraffa</taxon>
    </lineage>
</organism>
<protein>
    <recommendedName>
        <fullName>Seminal ribonuclease</fullName>
        <shortName>Seminal RNase</shortName>
        <ecNumber>4.6.1.18</ecNumber>
    </recommendedName>
</protein>
<keyword id="KW-1015">Disulfide bond</keyword>
<keyword id="KW-0255">Endonuclease</keyword>
<keyword id="KW-0378">Hydrolase</keyword>
<keyword id="KW-0456">Lyase</keyword>
<keyword id="KW-0540">Nuclease</keyword>
<keyword id="KW-0964">Secreted</keyword>
<feature type="chain" id="PRO_0000057170" description="Seminal ribonuclease">
    <location>
        <begin position="1" status="less than"/>
        <end position="84"/>
    </location>
</feature>
<feature type="binding site" evidence="1">
    <location>
        <begin position="11"/>
        <end position="15"/>
    </location>
    <ligand>
        <name>substrate</name>
    </ligand>
</feature>
<feature type="binding site" evidence="1">
    <location>
        <position position="36"/>
    </location>
    <ligand>
        <name>substrate</name>
    </ligand>
</feature>
<feature type="binding site" evidence="1">
    <location>
        <position position="55"/>
    </location>
    <ligand>
        <name>substrate</name>
    </ligand>
</feature>
<feature type="disulfide bond" description="Interchain">
    <location>
        <position position="2"/>
    </location>
</feature>
<feature type="disulfide bond" evidence="1">
    <location>
        <begin position="10"/>
        <end position="65"/>
    </location>
</feature>
<feature type="disulfide bond" evidence="1">
    <location>
        <begin position="28"/>
        <end position="80"/>
    </location>
</feature>
<feature type="disulfide bond" evidence="1">
    <location>
        <begin position="35"/>
        <end position="42"/>
    </location>
</feature>
<feature type="non-terminal residue">
    <location>
        <position position="1"/>
    </location>
</feature>
<reference key="1">
    <citation type="journal article" date="1993" name="J. Mol. Evol.">
        <title>Sequences related to the ox pancreatic ribonuclease coding region in the genomic DNA of mammalian species.</title>
        <authorList>
            <person name="Breukelman H.J."/>
            <person name="Beintema J.J."/>
            <person name="Confalone E."/>
            <person name="Costanzo C."/>
            <person name="Sasso M.P."/>
            <person name="Carsana A."/>
            <person name="Palmieri M."/>
            <person name="Furia A."/>
        </authorList>
    </citation>
    <scope>NUCLEOTIDE SEQUENCE [GENOMIC DNA]</scope>
</reference>